<reference key="1">
    <citation type="submission" date="2006-09" db="EMBL/GenBank/DDBJ databases">
        <title>NISC comparative sequencing initiative.</title>
        <authorList>
            <person name="Antonellis A."/>
            <person name="Ayele K."/>
            <person name="Benjamin B."/>
            <person name="Blakesley R.W."/>
            <person name="Boakye A."/>
            <person name="Bouffard G.G."/>
            <person name="Brinkley C."/>
            <person name="Brooks S."/>
            <person name="Chu G."/>
            <person name="Coleman H."/>
            <person name="Engle J."/>
            <person name="Gestole M."/>
            <person name="Greene A."/>
            <person name="Guan X."/>
            <person name="Gupta J."/>
            <person name="Haghighi P."/>
            <person name="Han J."/>
            <person name="Hansen N."/>
            <person name="Ho S.-L."/>
            <person name="Hu P."/>
            <person name="Hunter G."/>
            <person name="Hurle B."/>
            <person name="Idol J.R."/>
            <person name="Kwong P."/>
            <person name="Laric P."/>
            <person name="Larson S."/>
            <person name="Lee-Lin S.-Q."/>
            <person name="Legaspi R."/>
            <person name="Madden M."/>
            <person name="Maduro Q.L."/>
            <person name="Maduro V.B."/>
            <person name="Margulies E.H."/>
            <person name="Masiello C."/>
            <person name="Maskeri B."/>
            <person name="McDowell J."/>
            <person name="Mojidi H.A."/>
            <person name="Mullikin J.C."/>
            <person name="Oestreicher J.S."/>
            <person name="Park M."/>
            <person name="Portnoy M.E."/>
            <person name="Prasad A."/>
            <person name="Puri O."/>
            <person name="Reddix-Dugue N."/>
            <person name="Schandler K."/>
            <person name="Schueler M.G."/>
            <person name="Sison C."/>
            <person name="Stantripop S."/>
            <person name="Stephen E."/>
            <person name="Taye A."/>
            <person name="Thomas J.W."/>
            <person name="Thomas P.J."/>
            <person name="Tsipouri V."/>
            <person name="Ung L."/>
            <person name="Vogt J.L."/>
            <person name="Wetherby K.D."/>
            <person name="Young A."/>
            <person name="Green E.D."/>
        </authorList>
    </citation>
    <scope>NUCLEOTIDE SEQUENCE [LARGE SCALE GENOMIC DNA]</scope>
</reference>
<evidence type="ECO:0000250" key="1"/>
<evidence type="ECO:0000250" key="2">
    <source>
        <dbReference type="UniProtKB" id="P51636"/>
    </source>
</evidence>
<evidence type="ECO:0000250" key="3">
    <source>
        <dbReference type="UniProtKB" id="Q9WVC3"/>
    </source>
</evidence>
<evidence type="ECO:0000255" key="4"/>
<evidence type="ECO:0000305" key="5"/>
<dbReference type="EMBL" id="DP000181">
    <property type="protein sequence ID" value="ABI93626.1"/>
    <property type="molecule type" value="Genomic_DNA"/>
</dbReference>
<dbReference type="RefSeq" id="XP_058153234.1">
    <property type="nucleotide sequence ID" value="XM_058297251.2"/>
</dbReference>
<dbReference type="SMR" id="Q07E50"/>
<dbReference type="GeneID" id="101435788"/>
<dbReference type="HOGENOM" id="CLU_102582_0_0_1"/>
<dbReference type="OrthoDB" id="5917823at2759"/>
<dbReference type="TreeFam" id="TF315736"/>
<dbReference type="GO" id="GO:0005901">
    <property type="term" value="C:caveola"/>
    <property type="evidence" value="ECO:0000250"/>
    <property type="project" value="UniProtKB"/>
</dbReference>
<dbReference type="GO" id="GO:0031410">
    <property type="term" value="C:cytoplasmic vesicle"/>
    <property type="evidence" value="ECO:0007669"/>
    <property type="project" value="TreeGrafter"/>
</dbReference>
<dbReference type="GO" id="GO:0005925">
    <property type="term" value="C:focal adhesion"/>
    <property type="evidence" value="ECO:0007669"/>
    <property type="project" value="TreeGrafter"/>
</dbReference>
<dbReference type="GO" id="GO:0000139">
    <property type="term" value="C:Golgi membrane"/>
    <property type="evidence" value="ECO:0007669"/>
    <property type="project" value="UniProtKB-SubCell"/>
</dbReference>
<dbReference type="GO" id="GO:0005634">
    <property type="term" value="C:nucleus"/>
    <property type="evidence" value="ECO:0007669"/>
    <property type="project" value="UniProtKB-SubCell"/>
</dbReference>
<dbReference type="GO" id="GO:0048471">
    <property type="term" value="C:perinuclear region of cytoplasm"/>
    <property type="evidence" value="ECO:0000250"/>
    <property type="project" value="UniProtKB"/>
</dbReference>
<dbReference type="GO" id="GO:0044853">
    <property type="term" value="C:plasma membrane raft"/>
    <property type="evidence" value="ECO:0000250"/>
    <property type="project" value="UniProtKB"/>
</dbReference>
<dbReference type="GO" id="GO:0042383">
    <property type="term" value="C:sarcolemma"/>
    <property type="evidence" value="ECO:0007669"/>
    <property type="project" value="TreeGrafter"/>
</dbReference>
<dbReference type="GO" id="GO:0031748">
    <property type="term" value="F:D1 dopamine receptor binding"/>
    <property type="evidence" value="ECO:0000250"/>
    <property type="project" value="UniProtKB"/>
</dbReference>
<dbReference type="GO" id="GO:0060090">
    <property type="term" value="F:molecular adaptor activity"/>
    <property type="evidence" value="ECO:0007669"/>
    <property type="project" value="TreeGrafter"/>
</dbReference>
<dbReference type="GO" id="GO:0019901">
    <property type="term" value="F:protein kinase binding"/>
    <property type="evidence" value="ECO:0007669"/>
    <property type="project" value="TreeGrafter"/>
</dbReference>
<dbReference type="GO" id="GO:0070836">
    <property type="term" value="P:caveola assembly"/>
    <property type="evidence" value="ECO:0000250"/>
    <property type="project" value="UniProtKB"/>
</dbReference>
<dbReference type="GO" id="GO:0007029">
    <property type="term" value="P:endoplasmic reticulum organization"/>
    <property type="evidence" value="ECO:0000250"/>
    <property type="project" value="UniProtKB"/>
</dbReference>
<dbReference type="GO" id="GO:0008286">
    <property type="term" value="P:insulin receptor signaling pathway"/>
    <property type="evidence" value="ECO:0007669"/>
    <property type="project" value="TreeGrafter"/>
</dbReference>
<dbReference type="GO" id="GO:0007005">
    <property type="term" value="P:mitochondrion organization"/>
    <property type="evidence" value="ECO:0000250"/>
    <property type="project" value="UniProtKB"/>
</dbReference>
<dbReference type="GO" id="GO:0001937">
    <property type="term" value="P:negative regulation of endothelial cell proliferation"/>
    <property type="evidence" value="ECO:0000250"/>
    <property type="project" value="UniProtKB"/>
</dbReference>
<dbReference type="GO" id="GO:0060161">
    <property type="term" value="P:positive regulation of dopamine receptor signaling pathway"/>
    <property type="evidence" value="ECO:0000250"/>
    <property type="project" value="UniProtKB"/>
</dbReference>
<dbReference type="GO" id="GO:0051480">
    <property type="term" value="P:regulation of cytosolic calcium ion concentration"/>
    <property type="evidence" value="ECO:0007669"/>
    <property type="project" value="TreeGrafter"/>
</dbReference>
<dbReference type="GO" id="GO:0048741">
    <property type="term" value="P:skeletal muscle fiber development"/>
    <property type="evidence" value="ECO:0000250"/>
    <property type="project" value="UniProtKB"/>
</dbReference>
<dbReference type="GO" id="GO:0048278">
    <property type="term" value="P:vesicle docking"/>
    <property type="evidence" value="ECO:0000250"/>
    <property type="project" value="UniProtKB"/>
</dbReference>
<dbReference type="GO" id="GO:0006906">
    <property type="term" value="P:vesicle fusion"/>
    <property type="evidence" value="ECO:0000250"/>
    <property type="project" value="UniProtKB"/>
</dbReference>
<dbReference type="InterPro" id="IPR001612">
    <property type="entry name" value="Caveolin"/>
</dbReference>
<dbReference type="InterPro" id="IPR018361">
    <property type="entry name" value="Caveolin_CS"/>
</dbReference>
<dbReference type="PANTHER" id="PTHR10844">
    <property type="entry name" value="CAVEOLIN"/>
    <property type="match status" value="1"/>
</dbReference>
<dbReference type="PANTHER" id="PTHR10844:SF3">
    <property type="entry name" value="CAVEOLIN-2"/>
    <property type="match status" value="1"/>
</dbReference>
<dbReference type="Pfam" id="PF01146">
    <property type="entry name" value="Caveolin"/>
    <property type="match status" value="1"/>
</dbReference>
<dbReference type="PROSITE" id="PS01210">
    <property type="entry name" value="CAVEOLIN"/>
    <property type="match status" value="1"/>
</dbReference>
<protein>
    <recommendedName>
        <fullName>Caveolin-2</fullName>
    </recommendedName>
</protein>
<accession>Q07E50</accession>
<organism>
    <name type="scientific">Dasypus novemcinctus</name>
    <name type="common">Nine-banded armadillo</name>
    <dbReference type="NCBI Taxonomy" id="9361"/>
    <lineage>
        <taxon>Eukaryota</taxon>
        <taxon>Metazoa</taxon>
        <taxon>Chordata</taxon>
        <taxon>Craniata</taxon>
        <taxon>Vertebrata</taxon>
        <taxon>Euteleostomi</taxon>
        <taxon>Mammalia</taxon>
        <taxon>Eutheria</taxon>
        <taxon>Xenarthra</taxon>
        <taxon>Cingulata</taxon>
        <taxon>Dasypodidae</taxon>
        <taxon>Dasypus</taxon>
    </lineage>
</organism>
<keyword id="KW-1003">Cell membrane</keyword>
<keyword id="KW-0963">Cytoplasm</keyword>
<keyword id="KW-0333">Golgi apparatus</keyword>
<keyword id="KW-0472">Membrane</keyword>
<keyword id="KW-0539">Nucleus</keyword>
<keyword id="KW-0597">Phosphoprotein</keyword>
<proteinExistence type="inferred from homology"/>
<gene>
    <name type="primary">CAV2</name>
</gene>
<comment type="function">
    <text evidence="1">May act as a scaffolding protein within caveolar membranes. Interacts directly with G-protein alpha subunits and can functionally regulate their activity. Acts as an accessory protein in conjunction with CAV1 in targeting to lipid rafts and driving caveolae formation. Positive regulator of cellular mitogenesis of the MAPK signaling pathway. Required for the insulin-stimulated nuclear translocation and activation of MAPK1 and STAT3, and the subsequent regulation of cell cycle progression (By similarity).</text>
</comment>
<comment type="subunit">
    <text evidence="1">Monomer or homodimer (By similarity). Interacts with CAV1; the interaction forms a stable heterooligomeric complex that is required for targeting to lipid rafts and for caveolae formation. Tyrosine phosphorylated forms do not form heterooligomers with the Tyr-19-phosphorylated form existing as a monomer or dimer, and the Tyr-27-form as a monomer only. Interacts (tyrosine phosphorylated form) with the SH2 domain-containing proteins, RASA1, NCK1 and SRC. Interacts (tyrosine phosphorylated form) with INSR, the interaction (Tyr-27-phosphorylated form) is increased on insulin stimulation. Interacts (Tyr-19 phosphorylated form) with MAPK1 (phosphorylated form); the interaction, promoted by insulin, leads to nuclear location and MAPK1 activation. Interacts with STAT3; the interaction is increased on insulin-induced tyrosine phosphorylation leading to STAT activation (By similarity).</text>
</comment>
<comment type="subcellular location">
    <subcellularLocation>
        <location evidence="1">Nucleus</location>
    </subcellularLocation>
    <subcellularLocation>
        <location evidence="1">Cytoplasm</location>
    </subcellularLocation>
    <subcellularLocation>
        <location>Golgi apparatus membrane</location>
        <topology>Peripheral membrane protein</topology>
    </subcellularLocation>
    <subcellularLocation>
        <location>Cell membrane</location>
        <topology>Peripheral membrane protein</topology>
    </subcellularLocation>
    <subcellularLocation>
        <location>Membrane</location>
        <location>Caveola</location>
        <topology>Peripheral membrane protein</topology>
    </subcellularLocation>
    <text evidence="1">Potential hairpin-like structure in the membrane. Membrane protein of caveolae. Tyr-19-phosphorylated form is enriched at sites of cell-cell contact and is translocated to the nucleus in complex with MAPK1 in response to insulin. Tyr-27-phosphorylated form is located both in the cytoplasm and plasma membrane. CAV1-mediated Ser-23-phosphorylated form locates to the plasma membrane (By similarity).</text>
</comment>
<comment type="PTM">
    <text evidence="1">Phosphorylated on serine and tyrosine residues. CAV1 promotes phosphorylation on Ser-23 which then targets the complex to the plasma membrane, lipid rafts and caveolae. Phosphorylation on both Tyr-19 and Tyr-27 is required for insulin-induced 'Ser-727' phosphorylation of STAT3 and its activation. Phosphorylation on Tyr-19 is required for insulin-induced phosphorylation of MAPK1 and DNA binding of STAT3. Tyrosine phosphorylation is induced by both EGF and insulin (By similarity).</text>
</comment>
<comment type="similarity">
    <text evidence="5">Belongs to the caveolin family.</text>
</comment>
<sequence>MGLETEKADVQLFVDDDVYSRHSGVDYGDSEKFTDLGVDRDPRRLNSHLQLGFEDVIAEPVSTHSLDKVWICSHALFEISKYIIYKFLTVFLAIPLAFAAGILFATLSCLHIWITMPFVKTCLMVLPSVQTIWKSVTDVAIAPLCTSVGRSFSSVSLQLSHD</sequence>
<name>CAV2_DASNO</name>
<feature type="chain" id="PRO_0000260378" description="Caveolin-2">
    <location>
        <begin position="1"/>
        <end position="162"/>
    </location>
</feature>
<feature type="topological domain" description="Cytoplasmic" evidence="4">
    <location>
        <begin position="1"/>
        <end position="86"/>
    </location>
</feature>
<feature type="intramembrane region" description="Helical" evidence="4">
    <location>
        <begin position="87"/>
        <end position="107"/>
    </location>
</feature>
<feature type="topological domain" description="Cytoplasmic" evidence="4">
    <location>
        <begin position="108"/>
        <end position="162"/>
    </location>
</feature>
<feature type="modified residue" description="Phosphotyrosine; by SRC" evidence="2">
    <location>
        <position position="19"/>
    </location>
</feature>
<feature type="modified residue" description="Phosphoserine" evidence="3">
    <location>
        <position position="20"/>
    </location>
</feature>
<feature type="modified residue" description="Phosphoserine" evidence="2">
    <location>
        <position position="23"/>
    </location>
</feature>
<feature type="modified residue" description="Phosphotyrosine; by SRC" evidence="2">
    <location>
        <position position="27"/>
    </location>
</feature>